<dbReference type="EC" id="2.7.11.-"/>
<dbReference type="EMBL" id="AF074021">
    <property type="status" value="NOT_ANNOTATED_CDS"/>
    <property type="molecule type" value="Genomic_DNA"/>
</dbReference>
<dbReference type="EMBL" id="AF076243">
    <property type="protein sequence ID" value="AAD29766.1"/>
    <property type="molecule type" value="Genomic_DNA"/>
</dbReference>
<dbReference type="EMBL" id="AL161500">
    <property type="protein sequence ID" value="CAB77922.1"/>
    <property type="molecule type" value="Genomic_DNA"/>
</dbReference>
<dbReference type="EMBL" id="CP002687">
    <property type="protein sequence ID" value="AEE82397.1"/>
    <property type="molecule type" value="Genomic_DNA"/>
</dbReference>
<dbReference type="PIR" id="C85057">
    <property type="entry name" value="C85057"/>
</dbReference>
<dbReference type="RefSeq" id="NP_192363.1">
    <property type="nucleotide sequence ID" value="NM_116692.2"/>
</dbReference>
<dbReference type="SMR" id="Q9SYS7"/>
<dbReference type="BioGRID" id="11096">
    <property type="interactions" value="3"/>
</dbReference>
<dbReference type="IntAct" id="Q9SYS7">
    <property type="interactions" value="2"/>
</dbReference>
<dbReference type="STRING" id="3702.Q9SYS7"/>
<dbReference type="GlyCosmos" id="Q9SYS7">
    <property type="glycosylation" value="8 sites, No reported glycans"/>
</dbReference>
<dbReference type="GlyGen" id="Q9SYS7">
    <property type="glycosylation" value="8 sites"/>
</dbReference>
<dbReference type="PaxDb" id="3702-AT4G04540.1"/>
<dbReference type="ProteomicsDB" id="222764"/>
<dbReference type="EnsemblPlants" id="AT4G04540.1">
    <property type="protein sequence ID" value="AT4G04540.1"/>
    <property type="gene ID" value="AT4G04540"/>
</dbReference>
<dbReference type="GeneID" id="825785"/>
<dbReference type="Gramene" id="AT4G04540.1">
    <property type="protein sequence ID" value="AT4G04540.1"/>
    <property type="gene ID" value="AT4G04540"/>
</dbReference>
<dbReference type="KEGG" id="ath:AT4G04540"/>
<dbReference type="Araport" id="AT4G04540"/>
<dbReference type="TAIR" id="AT4G04540">
    <property type="gene designation" value="CRK39"/>
</dbReference>
<dbReference type="eggNOG" id="ENOG502SE86">
    <property type="taxonomic scope" value="Eukaryota"/>
</dbReference>
<dbReference type="HOGENOM" id="CLU_000288_35_2_1"/>
<dbReference type="InParanoid" id="Q9SYS7"/>
<dbReference type="OMA" id="KTCLREC"/>
<dbReference type="PhylomeDB" id="Q9SYS7"/>
<dbReference type="PRO" id="PR:Q9SYS7"/>
<dbReference type="Proteomes" id="UP000006548">
    <property type="component" value="Chromosome 4"/>
</dbReference>
<dbReference type="ExpressionAtlas" id="Q9SYS7">
    <property type="expression patterns" value="baseline and differential"/>
</dbReference>
<dbReference type="GO" id="GO:0016020">
    <property type="term" value="C:membrane"/>
    <property type="evidence" value="ECO:0007669"/>
    <property type="project" value="UniProtKB-SubCell"/>
</dbReference>
<dbReference type="GO" id="GO:0005524">
    <property type="term" value="F:ATP binding"/>
    <property type="evidence" value="ECO:0007669"/>
    <property type="project" value="UniProtKB-KW"/>
</dbReference>
<dbReference type="GO" id="GO:0106310">
    <property type="term" value="F:protein serine kinase activity"/>
    <property type="evidence" value="ECO:0007669"/>
    <property type="project" value="RHEA"/>
</dbReference>
<dbReference type="GO" id="GO:0004674">
    <property type="term" value="F:protein serine/threonine kinase activity"/>
    <property type="evidence" value="ECO:0007669"/>
    <property type="project" value="UniProtKB-KW"/>
</dbReference>
<dbReference type="CDD" id="cd23509">
    <property type="entry name" value="Gnk2-like"/>
    <property type="match status" value="2"/>
</dbReference>
<dbReference type="CDD" id="cd14066">
    <property type="entry name" value="STKc_IRAK"/>
    <property type="match status" value="1"/>
</dbReference>
<dbReference type="FunFam" id="3.30.200.20:FF:000142">
    <property type="entry name" value="Cysteine-rich receptor-like protein kinase 10"/>
    <property type="match status" value="1"/>
</dbReference>
<dbReference type="FunFam" id="3.30.430.20:FF:000007">
    <property type="entry name" value="Cysteine-rich receptor-like protein kinase 11"/>
    <property type="match status" value="1"/>
</dbReference>
<dbReference type="FunFam" id="1.10.510.10:FF:000343">
    <property type="entry name" value="Cysteine-rich receptor-like protein kinase 28"/>
    <property type="match status" value="1"/>
</dbReference>
<dbReference type="FunFam" id="3.30.430.20:FF:000009">
    <property type="entry name" value="Cysteine-rich receptor-like protein kinase 28"/>
    <property type="match status" value="1"/>
</dbReference>
<dbReference type="Gene3D" id="3.30.430.20">
    <property type="entry name" value="Gnk2 domain, C-X8-C-X2-C motif"/>
    <property type="match status" value="2"/>
</dbReference>
<dbReference type="Gene3D" id="3.30.200.20">
    <property type="entry name" value="Phosphorylase Kinase, domain 1"/>
    <property type="match status" value="1"/>
</dbReference>
<dbReference type="Gene3D" id="1.10.510.10">
    <property type="entry name" value="Transferase(Phosphotransferase) domain 1"/>
    <property type="match status" value="1"/>
</dbReference>
<dbReference type="InterPro" id="IPR002902">
    <property type="entry name" value="GNK2"/>
</dbReference>
<dbReference type="InterPro" id="IPR038408">
    <property type="entry name" value="GNK2_sf"/>
</dbReference>
<dbReference type="InterPro" id="IPR011009">
    <property type="entry name" value="Kinase-like_dom_sf"/>
</dbReference>
<dbReference type="InterPro" id="IPR000719">
    <property type="entry name" value="Prot_kinase_dom"/>
</dbReference>
<dbReference type="InterPro" id="IPR017441">
    <property type="entry name" value="Protein_kinase_ATP_BS"/>
</dbReference>
<dbReference type="InterPro" id="IPR008271">
    <property type="entry name" value="Ser/Thr_kinase_AS"/>
</dbReference>
<dbReference type="PANTHER" id="PTHR27002:SF1008">
    <property type="entry name" value="CYSTEINE-RICH RECEPTOR-LIKE PROTEIN KINASE 40-RELATED"/>
    <property type="match status" value="1"/>
</dbReference>
<dbReference type="PANTHER" id="PTHR27002">
    <property type="entry name" value="RECEPTOR-LIKE SERINE/THREONINE-PROTEIN KINASE SD1-8"/>
    <property type="match status" value="1"/>
</dbReference>
<dbReference type="Pfam" id="PF00069">
    <property type="entry name" value="Pkinase"/>
    <property type="match status" value="1"/>
</dbReference>
<dbReference type="Pfam" id="PF01657">
    <property type="entry name" value="Stress-antifung"/>
    <property type="match status" value="2"/>
</dbReference>
<dbReference type="SMART" id="SM00220">
    <property type="entry name" value="S_TKc"/>
    <property type="match status" value="1"/>
</dbReference>
<dbReference type="SUPFAM" id="SSF56112">
    <property type="entry name" value="Protein kinase-like (PK-like)"/>
    <property type="match status" value="1"/>
</dbReference>
<dbReference type="PROSITE" id="PS51473">
    <property type="entry name" value="GNK2"/>
    <property type="match status" value="2"/>
</dbReference>
<dbReference type="PROSITE" id="PS00107">
    <property type="entry name" value="PROTEIN_KINASE_ATP"/>
    <property type="match status" value="1"/>
</dbReference>
<dbReference type="PROSITE" id="PS50011">
    <property type="entry name" value="PROTEIN_KINASE_DOM"/>
    <property type="match status" value="1"/>
</dbReference>
<dbReference type="PROSITE" id="PS00108">
    <property type="entry name" value="PROTEIN_KINASE_ST"/>
    <property type="match status" value="1"/>
</dbReference>
<reference key="1">
    <citation type="journal article" date="1999" name="Nature">
        <title>Sequence and analysis of chromosome 4 of the plant Arabidopsis thaliana.</title>
        <authorList>
            <person name="Mayer K.F.X."/>
            <person name="Schueller C."/>
            <person name="Wambutt R."/>
            <person name="Murphy G."/>
            <person name="Volckaert G."/>
            <person name="Pohl T."/>
            <person name="Duesterhoeft A."/>
            <person name="Stiekema W."/>
            <person name="Entian K.-D."/>
            <person name="Terryn N."/>
            <person name="Harris B."/>
            <person name="Ansorge W."/>
            <person name="Brandt P."/>
            <person name="Grivell L.A."/>
            <person name="Rieger M."/>
            <person name="Weichselgartner M."/>
            <person name="de Simone V."/>
            <person name="Obermaier B."/>
            <person name="Mache R."/>
            <person name="Mueller M."/>
            <person name="Kreis M."/>
            <person name="Delseny M."/>
            <person name="Puigdomenech P."/>
            <person name="Watson M."/>
            <person name="Schmidtheini T."/>
            <person name="Reichert B."/>
            <person name="Portetelle D."/>
            <person name="Perez-Alonso M."/>
            <person name="Boutry M."/>
            <person name="Bancroft I."/>
            <person name="Vos P."/>
            <person name="Hoheisel J."/>
            <person name="Zimmermann W."/>
            <person name="Wedler H."/>
            <person name="Ridley P."/>
            <person name="Langham S.-A."/>
            <person name="McCullagh B."/>
            <person name="Bilham L."/>
            <person name="Robben J."/>
            <person name="van der Schueren J."/>
            <person name="Grymonprez B."/>
            <person name="Chuang Y.-J."/>
            <person name="Vandenbussche F."/>
            <person name="Braeken M."/>
            <person name="Weltjens I."/>
            <person name="Voet M."/>
            <person name="Bastiaens I."/>
            <person name="Aert R."/>
            <person name="Defoor E."/>
            <person name="Weitzenegger T."/>
            <person name="Bothe G."/>
            <person name="Ramsperger U."/>
            <person name="Hilbert H."/>
            <person name="Braun M."/>
            <person name="Holzer E."/>
            <person name="Brandt A."/>
            <person name="Peters S."/>
            <person name="van Staveren M."/>
            <person name="Dirkse W."/>
            <person name="Mooijman P."/>
            <person name="Klein Lankhorst R."/>
            <person name="Rose M."/>
            <person name="Hauf J."/>
            <person name="Koetter P."/>
            <person name="Berneiser S."/>
            <person name="Hempel S."/>
            <person name="Feldpausch M."/>
            <person name="Lamberth S."/>
            <person name="Van den Daele H."/>
            <person name="De Keyser A."/>
            <person name="Buysshaert C."/>
            <person name="Gielen J."/>
            <person name="Villarroel R."/>
            <person name="De Clercq R."/>
            <person name="van Montagu M."/>
            <person name="Rogers J."/>
            <person name="Cronin A."/>
            <person name="Quail M.A."/>
            <person name="Bray-Allen S."/>
            <person name="Clark L."/>
            <person name="Doggett J."/>
            <person name="Hall S."/>
            <person name="Kay M."/>
            <person name="Lennard N."/>
            <person name="McLay K."/>
            <person name="Mayes R."/>
            <person name="Pettett A."/>
            <person name="Rajandream M.A."/>
            <person name="Lyne M."/>
            <person name="Benes V."/>
            <person name="Rechmann S."/>
            <person name="Borkova D."/>
            <person name="Bloecker H."/>
            <person name="Scharfe M."/>
            <person name="Grimm M."/>
            <person name="Loehnert T.-H."/>
            <person name="Dose S."/>
            <person name="de Haan M."/>
            <person name="Maarse A.C."/>
            <person name="Schaefer M."/>
            <person name="Mueller-Auer S."/>
            <person name="Gabel C."/>
            <person name="Fuchs M."/>
            <person name="Fartmann B."/>
            <person name="Granderath K."/>
            <person name="Dauner D."/>
            <person name="Herzl A."/>
            <person name="Neumann S."/>
            <person name="Argiriou A."/>
            <person name="Vitale D."/>
            <person name="Liguori R."/>
            <person name="Piravandi E."/>
            <person name="Massenet O."/>
            <person name="Quigley F."/>
            <person name="Clabauld G."/>
            <person name="Muendlein A."/>
            <person name="Felber R."/>
            <person name="Schnabl S."/>
            <person name="Hiller R."/>
            <person name="Schmidt W."/>
            <person name="Lecharny A."/>
            <person name="Aubourg S."/>
            <person name="Chefdor F."/>
            <person name="Cooke R."/>
            <person name="Berger C."/>
            <person name="Monfort A."/>
            <person name="Casacuberta E."/>
            <person name="Gibbons T."/>
            <person name="Weber N."/>
            <person name="Vandenbol M."/>
            <person name="Bargues M."/>
            <person name="Terol J."/>
            <person name="Torres A."/>
            <person name="Perez-Perez A."/>
            <person name="Purnelle B."/>
            <person name="Bent E."/>
            <person name="Johnson S."/>
            <person name="Tacon D."/>
            <person name="Jesse T."/>
            <person name="Heijnen L."/>
            <person name="Schwarz S."/>
            <person name="Scholler P."/>
            <person name="Heber S."/>
            <person name="Francs P."/>
            <person name="Bielke C."/>
            <person name="Frishman D."/>
            <person name="Haase D."/>
            <person name="Lemcke K."/>
            <person name="Mewes H.-W."/>
            <person name="Stocker S."/>
            <person name="Zaccaria P."/>
            <person name="Bevan M."/>
            <person name="Wilson R.K."/>
            <person name="de la Bastide M."/>
            <person name="Habermann K."/>
            <person name="Parnell L."/>
            <person name="Dedhia N."/>
            <person name="Gnoj L."/>
            <person name="Schutz K."/>
            <person name="Huang E."/>
            <person name="Spiegel L."/>
            <person name="Sekhon M."/>
            <person name="Murray J."/>
            <person name="Sheet P."/>
            <person name="Cordes M."/>
            <person name="Abu-Threideh J."/>
            <person name="Stoneking T."/>
            <person name="Kalicki J."/>
            <person name="Graves T."/>
            <person name="Harmon G."/>
            <person name="Edwards J."/>
            <person name="Latreille P."/>
            <person name="Courtney L."/>
            <person name="Cloud J."/>
            <person name="Abbott A."/>
            <person name="Scott K."/>
            <person name="Johnson D."/>
            <person name="Minx P."/>
            <person name="Bentley D."/>
            <person name="Fulton B."/>
            <person name="Miller N."/>
            <person name="Greco T."/>
            <person name="Kemp K."/>
            <person name="Kramer J."/>
            <person name="Fulton L."/>
            <person name="Mardis E."/>
            <person name="Dante M."/>
            <person name="Pepin K."/>
            <person name="Hillier L.W."/>
            <person name="Nelson J."/>
            <person name="Spieth J."/>
            <person name="Ryan E."/>
            <person name="Andrews S."/>
            <person name="Geisel C."/>
            <person name="Layman D."/>
            <person name="Du H."/>
            <person name="Ali J."/>
            <person name="Berghoff A."/>
            <person name="Jones K."/>
            <person name="Drone K."/>
            <person name="Cotton M."/>
            <person name="Joshu C."/>
            <person name="Antonoiu B."/>
            <person name="Zidanic M."/>
            <person name="Strong C."/>
            <person name="Sun H."/>
            <person name="Lamar B."/>
            <person name="Yordan C."/>
            <person name="Ma P."/>
            <person name="Zhong J."/>
            <person name="Preston R."/>
            <person name="Vil D."/>
            <person name="Shekher M."/>
            <person name="Matero A."/>
            <person name="Shah R."/>
            <person name="Swaby I.K."/>
            <person name="O'Shaughnessy A."/>
            <person name="Rodriguez M."/>
            <person name="Hoffman J."/>
            <person name="Till S."/>
            <person name="Granat S."/>
            <person name="Shohdy N."/>
            <person name="Hasegawa A."/>
            <person name="Hameed A."/>
            <person name="Lodhi M."/>
            <person name="Johnson A."/>
            <person name="Chen E."/>
            <person name="Marra M.A."/>
            <person name="Martienssen R."/>
            <person name="McCombie W.R."/>
        </authorList>
    </citation>
    <scope>NUCLEOTIDE SEQUENCE [LARGE SCALE GENOMIC DNA]</scope>
    <source>
        <strain>cv. Columbia</strain>
    </source>
</reference>
<reference key="2">
    <citation type="journal article" date="2017" name="Plant J.">
        <title>Araport11: a complete reannotation of the Arabidopsis thaliana reference genome.</title>
        <authorList>
            <person name="Cheng C.Y."/>
            <person name="Krishnakumar V."/>
            <person name="Chan A.P."/>
            <person name="Thibaud-Nissen F."/>
            <person name="Schobel S."/>
            <person name="Town C.D."/>
        </authorList>
    </citation>
    <scope>GENOME REANNOTATION</scope>
    <source>
        <strain>cv. Columbia</strain>
    </source>
</reference>
<reference key="3">
    <citation type="journal article" date="2001" name="Plant Physiol.">
        <title>A superfamily of proteins with novel cysteine-rich repeats.</title>
        <authorList>
            <person name="Chen Z."/>
        </authorList>
    </citation>
    <scope>GENE FAMILY ORGANIZATION</scope>
    <scope>NOMENCLATURE</scope>
</reference>
<comment type="catalytic activity">
    <reaction>
        <text>L-seryl-[protein] + ATP = O-phospho-L-seryl-[protein] + ADP + H(+)</text>
        <dbReference type="Rhea" id="RHEA:17989"/>
        <dbReference type="Rhea" id="RHEA-COMP:9863"/>
        <dbReference type="Rhea" id="RHEA-COMP:11604"/>
        <dbReference type="ChEBI" id="CHEBI:15378"/>
        <dbReference type="ChEBI" id="CHEBI:29999"/>
        <dbReference type="ChEBI" id="CHEBI:30616"/>
        <dbReference type="ChEBI" id="CHEBI:83421"/>
        <dbReference type="ChEBI" id="CHEBI:456216"/>
    </reaction>
</comment>
<comment type="catalytic activity">
    <reaction>
        <text>L-threonyl-[protein] + ATP = O-phospho-L-threonyl-[protein] + ADP + H(+)</text>
        <dbReference type="Rhea" id="RHEA:46608"/>
        <dbReference type="Rhea" id="RHEA-COMP:11060"/>
        <dbReference type="Rhea" id="RHEA-COMP:11605"/>
        <dbReference type="ChEBI" id="CHEBI:15378"/>
        <dbReference type="ChEBI" id="CHEBI:30013"/>
        <dbReference type="ChEBI" id="CHEBI:30616"/>
        <dbReference type="ChEBI" id="CHEBI:61977"/>
        <dbReference type="ChEBI" id="CHEBI:456216"/>
    </reaction>
</comment>
<comment type="subcellular location">
    <subcellularLocation>
        <location evidence="6">Membrane</location>
        <topology evidence="6">Single-pass membrane protein</topology>
    </subcellularLocation>
</comment>
<comment type="similarity">
    <text evidence="3">Belongs to the protein kinase superfamily. Ser/Thr protein kinase family. CRK subfamily.</text>
</comment>
<accession>Q9SYS7</accession>
<feature type="signal peptide" evidence="2">
    <location>
        <begin position="1"/>
        <end position="27"/>
    </location>
</feature>
<feature type="chain" id="PRO_0000295086" description="Putative cysteine-rich receptor-like protein kinase 39">
    <location>
        <begin position="28"/>
        <end position="659"/>
    </location>
</feature>
<feature type="topological domain" description="Extracellular" evidence="2">
    <location>
        <begin position="28"/>
        <end position="289"/>
    </location>
</feature>
<feature type="transmembrane region" description="Helical" evidence="2">
    <location>
        <begin position="290"/>
        <end position="310"/>
    </location>
</feature>
<feature type="topological domain" description="Cytoplasmic" evidence="2">
    <location>
        <begin position="311"/>
        <end position="659"/>
    </location>
</feature>
<feature type="domain" description="Gnk2-homologous 1" evidence="4">
    <location>
        <begin position="28"/>
        <end position="134"/>
    </location>
</feature>
<feature type="domain" description="Gnk2-homologous 2" evidence="4">
    <location>
        <begin position="142"/>
        <end position="253"/>
    </location>
</feature>
<feature type="domain" description="Protein kinase" evidence="3">
    <location>
        <begin position="353"/>
        <end position="619"/>
    </location>
</feature>
<feature type="active site" description="Proton acceptor" evidence="3 5">
    <location>
        <position position="478"/>
    </location>
</feature>
<feature type="binding site" evidence="3">
    <location>
        <begin position="359"/>
        <end position="367"/>
    </location>
    <ligand>
        <name>ATP</name>
        <dbReference type="ChEBI" id="CHEBI:30616"/>
    </ligand>
</feature>
<feature type="binding site" evidence="3">
    <location>
        <position position="381"/>
    </location>
    <ligand>
        <name>ATP</name>
        <dbReference type="ChEBI" id="CHEBI:30616"/>
    </ligand>
</feature>
<feature type="modified residue" description="Phosphotyrosine" evidence="1">
    <location>
        <position position="426"/>
    </location>
</feature>
<feature type="modified residue" description="Phosphoserine" evidence="1">
    <location>
        <position position="482"/>
    </location>
</feature>
<feature type="modified residue" description="Phosphothreonine" evidence="1">
    <location>
        <position position="518"/>
    </location>
</feature>
<feature type="modified residue" description="Phosphotyrosine" evidence="1">
    <location>
        <position position="526"/>
    </location>
</feature>
<feature type="glycosylation site" description="N-linked (GlcNAc...) asparagine" evidence="2">
    <location>
        <position position="38"/>
    </location>
</feature>
<feature type="glycosylation site" description="N-linked (GlcNAc...) asparagine" evidence="2">
    <location>
        <position position="64"/>
    </location>
</feature>
<feature type="glycosylation site" description="N-linked (GlcNAc...) asparagine" evidence="2">
    <location>
        <position position="122"/>
    </location>
</feature>
<feature type="glycosylation site" description="N-linked (GlcNAc...) asparagine" evidence="2">
    <location>
        <position position="131"/>
    </location>
</feature>
<feature type="glycosylation site" description="N-linked (GlcNAc...) asparagine" evidence="2">
    <location>
        <position position="157"/>
    </location>
</feature>
<feature type="glycosylation site" description="N-linked (GlcNAc...) asparagine" evidence="2">
    <location>
        <position position="170"/>
    </location>
</feature>
<feature type="glycosylation site" description="N-linked (GlcNAc...) asparagine" evidence="2">
    <location>
        <position position="259"/>
    </location>
</feature>
<feature type="glycosylation site" description="N-linked (GlcNAc...) asparagine" evidence="2">
    <location>
        <position position="274"/>
    </location>
</feature>
<protein>
    <recommendedName>
        <fullName>Putative cysteine-rich receptor-like protein kinase 39</fullName>
        <shortName>Cysteine-rich RLK39</shortName>
        <ecNumber>2.7.11.-</ecNumber>
    </recommendedName>
</protein>
<gene>
    <name type="primary">CRK39</name>
    <name type="ordered locus">At4g04540</name>
    <name type="ORF">F4H6.4</name>
    <name type="ORF">T26N6.15</name>
</gene>
<evidence type="ECO:0000250" key="1">
    <source>
        <dbReference type="UniProtKB" id="O48814"/>
    </source>
</evidence>
<evidence type="ECO:0000255" key="2"/>
<evidence type="ECO:0000255" key="3">
    <source>
        <dbReference type="PROSITE-ProRule" id="PRU00159"/>
    </source>
</evidence>
<evidence type="ECO:0000255" key="4">
    <source>
        <dbReference type="PROSITE-ProRule" id="PRU00806"/>
    </source>
</evidence>
<evidence type="ECO:0000255" key="5">
    <source>
        <dbReference type="PROSITE-ProRule" id="PRU10027"/>
    </source>
</evidence>
<evidence type="ECO:0000305" key="6"/>
<keyword id="KW-0067">ATP-binding</keyword>
<keyword id="KW-0325">Glycoprotein</keyword>
<keyword id="KW-0418">Kinase</keyword>
<keyword id="KW-0472">Membrane</keyword>
<keyword id="KW-0547">Nucleotide-binding</keyword>
<keyword id="KW-0597">Phosphoprotein</keyword>
<keyword id="KW-0675">Receptor</keyword>
<keyword id="KW-1185">Reference proteome</keyword>
<keyword id="KW-0677">Repeat</keyword>
<keyword id="KW-0723">Serine/threonine-protein kinase</keyword>
<keyword id="KW-0732">Signal</keyword>
<keyword id="KW-0808">Transferase</keyword>
<keyword id="KW-0812">Transmembrane</keyword>
<keyword id="KW-1133">Transmembrane helix</keyword>
<name>CRK39_ARATH</name>
<proteinExistence type="inferred from homology"/>
<organism>
    <name type="scientific">Arabidopsis thaliana</name>
    <name type="common">Mouse-ear cress</name>
    <dbReference type="NCBI Taxonomy" id="3702"/>
    <lineage>
        <taxon>Eukaryota</taxon>
        <taxon>Viridiplantae</taxon>
        <taxon>Streptophyta</taxon>
        <taxon>Embryophyta</taxon>
        <taxon>Tracheophyta</taxon>
        <taxon>Spermatophyta</taxon>
        <taxon>Magnoliopsida</taxon>
        <taxon>eudicotyledons</taxon>
        <taxon>Gunneridae</taxon>
        <taxon>Pentapetalae</taxon>
        <taxon>rosids</taxon>
        <taxon>malvids</taxon>
        <taxon>Brassicales</taxon>
        <taxon>Brassicaceae</taxon>
        <taxon>Camelineae</taxon>
        <taxon>Arabidopsis</taxon>
    </lineage>
</organism>
<sequence length="659" mass="73569">MGKYSVLMIFIASSLLIVLQNVEIVNAVGCTGSFFNGNSSYAQNRRDLFSTLPNKVVTNGGFYNSSLGKSPNIVHAVALCGRGYEQQACIRCVDSAIQGILTTTSCLNRVDSFTWDKDEEDNVSCLVSTSNHSTFGNLELRPSVRYQSPNSIEPSKNMTLFEQEWNAMANRTVESATEAETSSVLKYYSAEKAEFTEFPNVYMLMQCTPDITSQDCKTCLGECVTLFKEQVWGRQGGEVYRPSCFFRWDLYAFHGAFDNVTRVPAPPRPQAQGNESSITKKKGRSIGYGGIIAIVVVLTFINILVFIGYIKVYGRRKESYNKINVGSAEYSDSDGQFMLRFDLGMVLAATDEFSSENTLGQGGFGTVYKGTLLNGQEVAVKRLTKGSGQGDIEFKNEVSLLTRLQHRNLVKLLGFCNEGDEQILVYEFVPNSSLDHFIFDDEKRSLLTWEMRYRIIEGIARGLLYLHEDSQLKIIHRDLKASNILLDAEMNPKVADFGTARLFDSDETRAETKRIAGTRGYMAPEYLNHGQISAKSDVYSFGVMLLEMISGERNNSFEGEGLAAFAWKRWVEGKPEIIIDPFLIEKPRNEIIKLIQIGLLCVQENPTKRPTMSSVIIWLGSETNIIPLPKAPAFTGSRSQSEIGAMSMSDDVFTELSCR</sequence>